<name>S61G1_ARATH</name>
<gene>
    <name type="primary">SEC61G1</name>
    <name type="ordered locus">At4g24920</name>
    <name type="ORF">F13M23.60</name>
</gene>
<feature type="chain" id="PRO_0000104205" description="Protein transport protein Sec61 subunit gamma-1">
    <location>
        <begin position="1"/>
        <end position="69"/>
    </location>
</feature>
<feature type="topological domain" description="Cytoplasmic" evidence="2">
    <location>
        <begin position="1"/>
        <end position="32"/>
    </location>
</feature>
<feature type="transmembrane region" description="Helical" evidence="2">
    <location>
        <begin position="33"/>
        <end position="61"/>
    </location>
</feature>
<feature type="topological domain" description="Extracellular" evidence="2">
    <location>
        <begin position="62"/>
        <end position="69"/>
    </location>
</feature>
<feature type="modified residue" description="N-acetylmethionine" evidence="4">
    <location>
        <position position="1"/>
    </location>
</feature>
<dbReference type="EMBL" id="AL035523">
    <property type="protein sequence ID" value="CAB36734.1"/>
    <property type="molecule type" value="Genomic_DNA"/>
</dbReference>
<dbReference type="EMBL" id="AL161562">
    <property type="protein sequence ID" value="CAB79401.1"/>
    <property type="molecule type" value="Genomic_DNA"/>
</dbReference>
<dbReference type="EMBL" id="CP002687">
    <property type="protein sequence ID" value="AEE84976.1"/>
    <property type="molecule type" value="Genomic_DNA"/>
</dbReference>
<dbReference type="EMBL" id="AY099662">
    <property type="protein sequence ID" value="AAM20513.1"/>
    <property type="molecule type" value="mRNA"/>
</dbReference>
<dbReference type="EMBL" id="AY128850">
    <property type="protein sequence ID" value="AAM91250.1"/>
    <property type="molecule type" value="mRNA"/>
</dbReference>
<dbReference type="PIR" id="T05513">
    <property type="entry name" value="T05513"/>
</dbReference>
<dbReference type="RefSeq" id="NP_194222.1">
    <property type="nucleotide sequence ID" value="NM_118624.4"/>
</dbReference>
<dbReference type="RefSeq" id="NP_568728.1">
    <property type="nucleotide sequence ID" value="NM_124428.3"/>
</dbReference>
<dbReference type="SMR" id="P0DI74"/>
<dbReference type="FunCoup" id="P0DI74">
    <property type="interactions" value="2925"/>
</dbReference>
<dbReference type="STRING" id="3702.P0DI74"/>
<dbReference type="iPTMnet" id="P0DI74"/>
<dbReference type="PaxDb" id="3702-AT4G24920.1"/>
<dbReference type="EnsemblPlants" id="AT4G24920.1">
    <property type="protein sequence ID" value="AT4G24920.1"/>
    <property type="gene ID" value="AT4G24920"/>
</dbReference>
<dbReference type="EnsemblPlants" id="AT5G50460.1">
    <property type="protein sequence ID" value="AT5G50460.1"/>
    <property type="gene ID" value="AT5G50460"/>
</dbReference>
<dbReference type="GeneID" id="828594"/>
<dbReference type="Gramene" id="AT4G24920.1">
    <property type="protein sequence ID" value="AT4G24920.1"/>
    <property type="gene ID" value="AT4G24920"/>
</dbReference>
<dbReference type="Gramene" id="AT5G50460.1">
    <property type="protein sequence ID" value="AT5G50460.1"/>
    <property type="gene ID" value="AT5G50460"/>
</dbReference>
<dbReference type="KEGG" id="ath:AT4G24920"/>
<dbReference type="KEGG" id="ath:AT5G50460"/>
<dbReference type="Araport" id="AT4G24920"/>
<dbReference type="TAIR" id="AT4G24920"/>
<dbReference type="eggNOG" id="KOG3498">
    <property type="taxonomic scope" value="Eukaryota"/>
</dbReference>
<dbReference type="HOGENOM" id="CLU_167752_1_1_1"/>
<dbReference type="InParanoid" id="P0DI74"/>
<dbReference type="OMA" id="KPDQKEY"/>
<dbReference type="OrthoDB" id="1097767at2759"/>
<dbReference type="PhylomeDB" id="P0DI74"/>
<dbReference type="PRO" id="PR:P0DI74"/>
<dbReference type="Proteomes" id="UP000006548">
    <property type="component" value="Chromosome 4"/>
</dbReference>
<dbReference type="ExpressionAtlas" id="P0DI74">
    <property type="expression patterns" value="baseline and differential"/>
</dbReference>
<dbReference type="GO" id="GO:0005789">
    <property type="term" value="C:endoplasmic reticulum membrane"/>
    <property type="evidence" value="ECO:0007669"/>
    <property type="project" value="UniProtKB-SubCell"/>
</dbReference>
<dbReference type="GO" id="GO:0008320">
    <property type="term" value="F:protein transmembrane transporter activity"/>
    <property type="evidence" value="ECO:0007669"/>
    <property type="project" value="InterPro"/>
</dbReference>
<dbReference type="GO" id="GO:0006886">
    <property type="term" value="P:intracellular protein transport"/>
    <property type="evidence" value="ECO:0007669"/>
    <property type="project" value="InterPro"/>
</dbReference>
<dbReference type="GO" id="GO:0006605">
    <property type="term" value="P:protein targeting"/>
    <property type="evidence" value="ECO:0007669"/>
    <property type="project" value="InterPro"/>
</dbReference>
<dbReference type="FunFam" id="1.20.5.820:FF:000001">
    <property type="entry name" value="Transport protein Sec61 subunit gamma"/>
    <property type="match status" value="1"/>
</dbReference>
<dbReference type="Gene3D" id="1.20.5.820">
    <property type="entry name" value="Preprotein translocase SecE subunit"/>
    <property type="match status" value="1"/>
</dbReference>
<dbReference type="HAMAP" id="MF_00422">
    <property type="entry name" value="SecE"/>
    <property type="match status" value="1"/>
</dbReference>
<dbReference type="InterPro" id="IPR023391">
    <property type="entry name" value="Prot_translocase_SecE_dom_sf"/>
</dbReference>
<dbReference type="InterPro" id="IPR008158">
    <property type="entry name" value="Translocase_Sec61-g"/>
</dbReference>
<dbReference type="InterPro" id="IPR001901">
    <property type="entry name" value="Translocase_SecE/Sec61-g"/>
</dbReference>
<dbReference type="NCBIfam" id="TIGR00327">
    <property type="entry name" value="secE_euk_arch"/>
    <property type="match status" value="1"/>
</dbReference>
<dbReference type="PANTHER" id="PTHR12309">
    <property type="entry name" value="SEC61 GAMMA SUBUNIT"/>
    <property type="match status" value="1"/>
</dbReference>
<dbReference type="Pfam" id="PF00584">
    <property type="entry name" value="SecE"/>
    <property type="match status" value="1"/>
</dbReference>
<dbReference type="SUPFAM" id="SSF103456">
    <property type="entry name" value="Preprotein translocase SecE subunit"/>
    <property type="match status" value="1"/>
</dbReference>
<dbReference type="PROSITE" id="PS01067">
    <property type="entry name" value="SECE_SEC61G"/>
    <property type="match status" value="1"/>
</dbReference>
<proteinExistence type="evidence at protein level"/>
<organism>
    <name type="scientific">Arabidopsis thaliana</name>
    <name type="common">Mouse-ear cress</name>
    <dbReference type="NCBI Taxonomy" id="3702"/>
    <lineage>
        <taxon>Eukaryota</taxon>
        <taxon>Viridiplantae</taxon>
        <taxon>Streptophyta</taxon>
        <taxon>Embryophyta</taxon>
        <taxon>Tracheophyta</taxon>
        <taxon>Spermatophyta</taxon>
        <taxon>Magnoliopsida</taxon>
        <taxon>eudicotyledons</taxon>
        <taxon>Gunneridae</taxon>
        <taxon>Pentapetalae</taxon>
        <taxon>rosids</taxon>
        <taxon>malvids</taxon>
        <taxon>Brassicales</taxon>
        <taxon>Brassicaceae</taxon>
        <taxon>Camelineae</taxon>
        <taxon>Arabidopsis</taxon>
    </lineage>
</organism>
<sequence length="69" mass="7737">MDAIDSVVDPLRDFAKDSIRLVKRCHKPDRKEFTKVAVRTAIGFVVMGFVGFFVKLIFIPINNIIVGAT</sequence>
<evidence type="ECO:0000250" key="1"/>
<evidence type="ECO:0000255" key="2"/>
<evidence type="ECO:0000305" key="3"/>
<evidence type="ECO:0007744" key="4">
    <source>
    </source>
</evidence>
<comment type="function">
    <text evidence="1">Necessary for protein translocation in the endoplasmic reticulum.</text>
</comment>
<comment type="subunit">
    <text evidence="1">Heterotrimeric complex composed of SEC61-alpha, SEC61-beta and SEC61-gamma.</text>
</comment>
<comment type="subcellular location">
    <subcellularLocation>
        <location evidence="3">Endoplasmic reticulum membrane</location>
        <topology evidence="3">Single-pass membrane protein</topology>
    </subcellularLocation>
</comment>
<comment type="similarity">
    <text evidence="3">Belongs to the SecE/SEC61-gamma family.</text>
</comment>
<keyword id="KW-0007">Acetylation</keyword>
<keyword id="KW-0256">Endoplasmic reticulum</keyword>
<keyword id="KW-0472">Membrane</keyword>
<keyword id="KW-0653">Protein transport</keyword>
<keyword id="KW-1185">Reference proteome</keyword>
<keyword id="KW-0811">Translocation</keyword>
<keyword id="KW-0812">Transmembrane</keyword>
<keyword id="KW-1133">Transmembrane helix</keyword>
<keyword id="KW-0813">Transport</keyword>
<accession>P0DI74</accession>
<accession>Q9SW34</accession>
<protein>
    <recommendedName>
        <fullName>Protein transport protein Sec61 subunit gamma-1</fullName>
    </recommendedName>
</protein>
<reference key="1">
    <citation type="journal article" date="1999" name="Nature">
        <title>Sequence and analysis of chromosome 4 of the plant Arabidopsis thaliana.</title>
        <authorList>
            <person name="Mayer K.F.X."/>
            <person name="Schueller C."/>
            <person name="Wambutt R."/>
            <person name="Murphy G."/>
            <person name="Volckaert G."/>
            <person name="Pohl T."/>
            <person name="Duesterhoeft A."/>
            <person name="Stiekema W."/>
            <person name="Entian K.-D."/>
            <person name="Terryn N."/>
            <person name="Harris B."/>
            <person name="Ansorge W."/>
            <person name="Brandt P."/>
            <person name="Grivell L.A."/>
            <person name="Rieger M."/>
            <person name="Weichselgartner M."/>
            <person name="de Simone V."/>
            <person name="Obermaier B."/>
            <person name="Mache R."/>
            <person name="Mueller M."/>
            <person name="Kreis M."/>
            <person name="Delseny M."/>
            <person name="Puigdomenech P."/>
            <person name="Watson M."/>
            <person name="Schmidtheini T."/>
            <person name="Reichert B."/>
            <person name="Portetelle D."/>
            <person name="Perez-Alonso M."/>
            <person name="Boutry M."/>
            <person name="Bancroft I."/>
            <person name="Vos P."/>
            <person name="Hoheisel J."/>
            <person name="Zimmermann W."/>
            <person name="Wedler H."/>
            <person name="Ridley P."/>
            <person name="Langham S.-A."/>
            <person name="McCullagh B."/>
            <person name="Bilham L."/>
            <person name="Robben J."/>
            <person name="van der Schueren J."/>
            <person name="Grymonprez B."/>
            <person name="Chuang Y.-J."/>
            <person name="Vandenbussche F."/>
            <person name="Braeken M."/>
            <person name="Weltjens I."/>
            <person name="Voet M."/>
            <person name="Bastiaens I."/>
            <person name="Aert R."/>
            <person name="Defoor E."/>
            <person name="Weitzenegger T."/>
            <person name="Bothe G."/>
            <person name="Ramsperger U."/>
            <person name="Hilbert H."/>
            <person name="Braun M."/>
            <person name="Holzer E."/>
            <person name="Brandt A."/>
            <person name="Peters S."/>
            <person name="van Staveren M."/>
            <person name="Dirkse W."/>
            <person name="Mooijman P."/>
            <person name="Klein Lankhorst R."/>
            <person name="Rose M."/>
            <person name="Hauf J."/>
            <person name="Koetter P."/>
            <person name="Berneiser S."/>
            <person name="Hempel S."/>
            <person name="Feldpausch M."/>
            <person name="Lamberth S."/>
            <person name="Van den Daele H."/>
            <person name="De Keyser A."/>
            <person name="Buysshaert C."/>
            <person name="Gielen J."/>
            <person name="Villarroel R."/>
            <person name="De Clercq R."/>
            <person name="van Montagu M."/>
            <person name="Rogers J."/>
            <person name="Cronin A."/>
            <person name="Quail M.A."/>
            <person name="Bray-Allen S."/>
            <person name="Clark L."/>
            <person name="Doggett J."/>
            <person name="Hall S."/>
            <person name="Kay M."/>
            <person name="Lennard N."/>
            <person name="McLay K."/>
            <person name="Mayes R."/>
            <person name="Pettett A."/>
            <person name="Rajandream M.A."/>
            <person name="Lyne M."/>
            <person name="Benes V."/>
            <person name="Rechmann S."/>
            <person name="Borkova D."/>
            <person name="Bloecker H."/>
            <person name="Scharfe M."/>
            <person name="Grimm M."/>
            <person name="Loehnert T.-H."/>
            <person name="Dose S."/>
            <person name="de Haan M."/>
            <person name="Maarse A.C."/>
            <person name="Schaefer M."/>
            <person name="Mueller-Auer S."/>
            <person name="Gabel C."/>
            <person name="Fuchs M."/>
            <person name="Fartmann B."/>
            <person name="Granderath K."/>
            <person name="Dauner D."/>
            <person name="Herzl A."/>
            <person name="Neumann S."/>
            <person name="Argiriou A."/>
            <person name="Vitale D."/>
            <person name="Liguori R."/>
            <person name="Piravandi E."/>
            <person name="Massenet O."/>
            <person name="Quigley F."/>
            <person name="Clabauld G."/>
            <person name="Muendlein A."/>
            <person name="Felber R."/>
            <person name="Schnabl S."/>
            <person name="Hiller R."/>
            <person name="Schmidt W."/>
            <person name="Lecharny A."/>
            <person name="Aubourg S."/>
            <person name="Chefdor F."/>
            <person name="Cooke R."/>
            <person name="Berger C."/>
            <person name="Monfort A."/>
            <person name="Casacuberta E."/>
            <person name="Gibbons T."/>
            <person name="Weber N."/>
            <person name="Vandenbol M."/>
            <person name="Bargues M."/>
            <person name="Terol J."/>
            <person name="Torres A."/>
            <person name="Perez-Perez A."/>
            <person name="Purnelle B."/>
            <person name="Bent E."/>
            <person name="Johnson S."/>
            <person name="Tacon D."/>
            <person name="Jesse T."/>
            <person name="Heijnen L."/>
            <person name="Schwarz S."/>
            <person name="Scholler P."/>
            <person name="Heber S."/>
            <person name="Francs P."/>
            <person name="Bielke C."/>
            <person name="Frishman D."/>
            <person name="Haase D."/>
            <person name="Lemcke K."/>
            <person name="Mewes H.-W."/>
            <person name="Stocker S."/>
            <person name="Zaccaria P."/>
            <person name="Bevan M."/>
            <person name="Wilson R.K."/>
            <person name="de la Bastide M."/>
            <person name="Habermann K."/>
            <person name="Parnell L."/>
            <person name="Dedhia N."/>
            <person name="Gnoj L."/>
            <person name="Schutz K."/>
            <person name="Huang E."/>
            <person name="Spiegel L."/>
            <person name="Sekhon M."/>
            <person name="Murray J."/>
            <person name="Sheet P."/>
            <person name="Cordes M."/>
            <person name="Abu-Threideh J."/>
            <person name="Stoneking T."/>
            <person name="Kalicki J."/>
            <person name="Graves T."/>
            <person name="Harmon G."/>
            <person name="Edwards J."/>
            <person name="Latreille P."/>
            <person name="Courtney L."/>
            <person name="Cloud J."/>
            <person name="Abbott A."/>
            <person name="Scott K."/>
            <person name="Johnson D."/>
            <person name="Minx P."/>
            <person name="Bentley D."/>
            <person name="Fulton B."/>
            <person name="Miller N."/>
            <person name="Greco T."/>
            <person name="Kemp K."/>
            <person name="Kramer J."/>
            <person name="Fulton L."/>
            <person name="Mardis E."/>
            <person name="Dante M."/>
            <person name="Pepin K."/>
            <person name="Hillier L.W."/>
            <person name="Nelson J."/>
            <person name="Spieth J."/>
            <person name="Ryan E."/>
            <person name="Andrews S."/>
            <person name="Geisel C."/>
            <person name="Layman D."/>
            <person name="Du H."/>
            <person name="Ali J."/>
            <person name="Berghoff A."/>
            <person name="Jones K."/>
            <person name="Drone K."/>
            <person name="Cotton M."/>
            <person name="Joshu C."/>
            <person name="Antonoiu B."/>
            <person name="Zidanic M."/>
            <person name="Strong C."/>
            <person name="Sun H."/>
            <person name="Lamar B."/>
            <person name="Yordan C."/>
            <person name="Ma P."/>
            <person name="Zhong J."/>
            <person name="Preston R."/>
            <person name="Vil D."/>
            <person name="Shekher M."/>
            <person name="Matero A."/>
            <person name="Shah R."/>
            <person name="Swaby I.K."/>
            <person name="O'Shaughnessy A."/>
            <person name="Rodriguez M."/>
            <person name="Hoffman J."/>
            <person name="Till S."/>
            <person name="Granat S."/>
            <person name="Shohdy N."/>
            <person name="Hasegawa A."/>
            <person name="Hameed A."/>
            <person name="Lodhi M."/>
            <person name="Johnson A."/>
            <person name="Chen E."/>
            <person name="Marra M.A."/>
            <person name="Martienssen R."/>
            <person name="McCombie W.R."/>
        </authorList>
    </citation>
    <scope>NUCLEOTIDE SEQUENCE [LARGE SCALE GENOMIC DNA]</scope>
    <source>
        <strain>cv. Columbia</strain>
    </source>
</reference>
<reference key="2">
    <citation type="journal article" date="2017" name="Plant J.">
        <title>Araport11: a complete reannotation of the Arabidopsis thaliana reference genome.</title>
        <authorList>
            <person name="Cheng C.Y."/>
            <person name="Krishnakumar V."/>
            <person name="Chan A.P."/>
            <person name="Thibaud-Nissen F."/>
            <person name="Schobel S."/>
            <person name="Town C.D."/>
        </authorList>
    </citation>
    <scope>GENOME REANNOTATION</scope>
    <source>
        <strain>cv. Columbia</strain>
    </source>
</reference>
<reference key="3">
    <citation type="journal article" date="2003" name="Science">
        <title>Empirical analysis of transcriptional activity in the Arabidopsis genome.</title>
        <authorList>
            <person name="Yamada K."/>
            <person name="Lim J."/>
            <person name="Dale J.M."/>
            <person name="Chen H."/>
            <person name="Shinn P."/>
            <person name="Palm C.J."/>
            <person name="Southwick A.M."/>
            <person name="Wu H.C."/>
            <person name="Kim C.J."/>
            <person name="Nguyen M."/>
            <person name="Pham P.K."/>
            <person name="Cheuk R.F."/>
            <person name="Karlin-Newmann G."/>
            <person name="Liu S.X."/>
            <person name="Lam B."/>
            <person name="Sakano H."/>
            <person name="Wu T."/>
            <person name="Yu G."/>
            <person name="Miranda M."/>
            <person name="Quach H.L."/>
            <person name="Tripp M."/>
            <person name="Chang C.H."/>
            <person name="Lee J.M."/>
            <person name="Toriumi M.J."/>
            <person name="Chan M.M."/>
            <person name="Tang C.C."/>
            <person name="Onodera C.S."/>
            <person name="Deng J.M."/>
            <person name="Akiyama K."/>
            <person name="Ansari Y."/>
            <person name="Arakawa T."/>
            <person name="Banh J."/>
            <person name="Banno F."/>
            <person name="Bowser L."/>
            <person name="Brooks S.Y."/>
            <person name="Carninci P."/>
            <person name="Chao Q."/>
            <person name="Choy N."/>
            <person name="Enju A."/>
            <person name="Goldsmith A.D."/>
            <person name="Gurjal M."/>
            <person name="Hansen N.F."/>
            <person name="Hayashizaki Y."/>
            <person name="Johnson-Hopson C."/>
            <person name="Hsuan V.W."/>
            <person name="Iida K."/>
            <person name="Karnes M."/>
            <person name="Khan S."/>
            <person name="Koesema E."/>
            <person name="Ishida J."/>
            <person name="Jiang P.X."/>
            <person name="Jones T."/>
            <person name="Kawai J."/>
            <person name="Kamiya A."/>
            <person name="Meyers C."/>
            <person name="Nakajima M."/>
            <person name="Narusaka M."/>
            <person name="Seki M."/>
            <person name="Sakurai T."/>
            <person name="Satou M."/>
            <person name="Tamse R."/>
            <person name="Vaysberg M."/>
            <person name="Wallender E.K."/>
            <person name="Wong C."/>
            <person name="Yamamura Y."/>
            <person name="Yuan S."/>
            <person name="Shinozaki K."/>
            <person name="Davis R.W."/>
            <person name="Theologis A."/>
            <person name="Ecker J.R."/>
        </authorList>
    </citation>
    <scope>NUCLEOTIDE SEQUENCE [LARGE SCALE MRNA]</scope>
    <source>
        <strain>cv. Columbia</strain>
    </source>
</reference>
<reference key="4">
    <citation type="journal article" date="2012" name="Mol. Cell. Proteomics">
        <title>Comparative large-scale characterisation of plant vs. mammal proteins reveals similar and idiosyncratic N-alpha acetylation features.</title>
        <authorList>
            <person name="Bienvenut W.V."/>
            <person name="Sumpton D."/>
            <person name="Martinez A."/>
            <person name="Lilla S."/>
            <person name="Espagne C."/>
            <person name="Meinnel T."/>
            <person name="Giglione C."/>
        </authorList>
    </citation>
    <scope>ACETYLATION [LARGE SCALE ANALYSIS] AT MET-1</scope>
    <scope>IDENTIFICATION BY MASS SPECTROMETRY [LARGE SCALE ANALYSIS]</scope>
</reference>